<accession>Q14FA7</accession>
<dbReference type="EC" id="1.97.1.12" evidence="2"/>
<dbReference type="EMBL" id="AP008956">
    <property type="protein sequence ID" value="BAE97255.1"/>
    <property type="molecule type" value="Genomic_DNA"/>
</dbReference>
<dbReference type="RefSeq" id="YP_665607.1">
    <property type="nucleotide sequence ID" value="NC_008235.1"/>
</dbReference>
<dbReference type="SMR" id="Q14FA7"/>
<dbReference type="GeneID" id="4178155"/>
<dbReference type="KEGG" id="palz:4178155"/>
<dbReference type="OrthoDB" id="15at3646"/>
<dbReference type="GO" id="GO:0009535">
    <property type="term" value="C:chloroplast thylakoid membrane"/>
    <property type="evidence" value="ECO:0007669"/>
    <property type="project" value="UniProtKB-SubCell"/>
</dbReference>
<dbReference type="GO" id="GO:0009522">
    <property type="term" value="C:photosystem I"/>
    <property type="evidence" value="ECO:0007669"/>
    <property type="project" value="UniProtKB-KW"/>
</dbReference>
<dbReference type="GO" id="GO:0051539">
    <property type="term" value="F:4 iron, 4 sulfur cluster binding"/>
    <property type="evidence" value="ECO:0007669"/>
    <property type="project" value="UniProtKB-KW"/>
</dbReference>
<dbReference type="GO" id="GO:0009055">
    <property type="term" value="F:electron transfer activity"/>
    <property type="evidence" value="ECO:0007669"/>
    <property type="project" value="UniProtKB-UniRule"/>
</dbReference>
<dbReference type="GO" id="GO:0046872">
    <property type="term" value="F:metal ion binding"/>
    <property type="evidence" value="ECO:0007669"/>
    <property type="project" value="UniProtKB-KW"/>
</dbReference>
<dbReference type="GO" id="GO:0016491">
    <property type="term" value="F:oxidoreductase activity"/>
    <property type="evidence" value="ECO:0007669"/>
    <property type="project" value="UniProtKB-KW"/>
</dbReference>
<dbReference type="GO" id="GO:0009773">
    <property type="term" value="P:photosynthetic electron transport in photosystem I"/>
    <property type="evidence" value="ECO:0007669"/>
    <property type="project" value="InterPro"/>
</dbReference>
<dbReference type="FunFam" id="3.30.70.20:FF:000001">
    <property type="entry name" value="Photosystem I iron-sulfur center"/>
    <property type="match status" value="1"/>
</dbReference>
<dbReference type="Gene3D" id="3.30.70.20">
    <property type="match status" value="1"/>
</dbReference>
<dbReference type="HAMAP" id="MF_01303">
    <property type="entry name" value="PSI_PsaC"/>
    <property type="match status" value="1"/>
</dbReference>
<dbReference type="InterPro" id="IPR017896">
    <property type="entry name" value="4Fe4S_Fe-S-bd"/>
</dbReference>
<dbReference type="InterPro" id="IPR017900">
    <property type="entry name" value="4Fe4S_Fe_S_CS"/>
</dbReference>
<dbReference type="InterPro" id="IPR050157">
    <property type="entry name" value="PSI_iron-sulfur_center"/>
</dbReference>
<dbReference type="InterPro" id="IPR017491">
    <property type="entry name" value="PSI_PsaC"/>
</dbReference>
<dbReference type="NCBIfam" id="TIGR03048">
    <property type="entry name" value="PS_I_psaC"/>
    <property type="match status" value="1"/>
</dbReference>
<dbReference type="PANTHER" id="PTHR24960:SF79">
    <property type="entry name" value="PHOTOSYSTEM I IRON-SULFUR CENTER"/>
    <property type="match status" value="1"/>
</dbReference>
<dbReference type="PANTHER" id="PTHR24960">
    <property type="entry name" value="PHOTOSYSTEM I IRON-SULFUR CENTER-RELATED"/>
    <property type="match status" value="1"/>
</dbReference>
<dbReference type="Pfam" id="PF14697">
    <property type="entry name" value="Fer4_21"/>
    <property type="match status" value="1"/>
</dbReference>
<dbReference type="SUPFAM" id="SSF54862">
    <property type="entry name" value="4Fe-4S ferredoxins"/>
    <property type="match status" value="1"/>
</dbReference>
<dbReference type="PROSITE" id="PS00198">
    <property type="entry name" value="4FE4S_FER_1"/>
    <property type="match status" value="2"/>
</dbReference>
<dbReference type="PROSITE" id="PS51379">
    <property type="entry name" value="4FE4S_FER_2"/>
    <property type="match status" value="2"/>
</dbReference>
<geneLocation type="chloroplast"/>
<evidence type="ECO:0000250" key="1"/>
<evidence type="ECO:0000255" key="2">
    <source>
        <dbReference type="HAMAP-Rule" id="MF_01303"/>
    </source>
</evidence>
<name>PSAC_POPAL</name>
<reference key="1">
    <citation type="submission" date="2005-03" db="EMBL/GenBank/DDBJ databases">
        <title>Complete structure of the chloroplast genome of Populus alba.</title>
        <authorList>
            <person name="Okumura S."/>
            <person name="Yamashita A."/>
            <person name="Kanamoto H."/>
            <person name="Hattori M."/>
            <person name="Takase H."/>
            <person name="Tomizawa K."/>
        </authorList>
    </citation>
    <scope>NUCLEOTIDE SEQUENCE [LARGE SCALE GENOMIC DNA]</scope>
</reference>
<protein>
    <recommendedName>
        <fullName evidence="2">Photosystem I iron-sulfur center</fullName>
        <ecNumber evidence="2">1.97.1.12</ecNumber>
    </recommendedName>
    <alternativeName>
        <fullName evidence="2">9 kDa polypeptide</fullName>
    </alternativeName>
    <alternativeName>
        <fullName evidence="2">PSI-C</fullName>
    </alternativeName>
    <alternativeName>
        <fullName evidence="2">Photosystem I subunit VII</fullName>
    </alternativeName>
    <alternativeName>
        <fullName evidence="2">PsaC</fullName>
    </alternativeName>
</protein>
<sequence length="81" mass="9038">MSHSVKIYDTCIGCTQCVRACPTDVLEMIPWDGCKAKQIASAPRTEDCVGCKRCESACPTDFLSVRVYLWHETTRSMGLAY</sequence>
<organism>
    <name type="scientific">Populus alba</name>
    <name type="common">White poplar</name>
    <dbReference type="NCBI Taxonomy" id="43335"/>
    <lineage>
        <taxon>Eukaryota</taxon>
        <taxon>Viridiplantae</taxon>
        <taxon>Streptophyta</taxon>
        <taxon>Embryophyta</taxon>
        <taxon>Tracheophyta</taxon>
        <taxon>Spermatophyta</taxon>
        <taxon>Magnoliopsida</taxon>
        <taxon>eudicotyledons</taxon>
        <taxon>Gunneridae</taxon>
        <taxon>Pentapetalae</taxon>
        <taxon>rosids</taxon>
        <taxon>fabids</taxon>
        <taxon>Malpighiales</taxon>
        <taxon>Salicaceae</taxon>
        <taxon>Saliceae</taxon>
        <taxon>Populus</taxon>
    </lineage>
</organism>
<comment type="function">
    <text evidence="2">Apoprotein for the two 4Fe-4S centers FA and FB of photosystem I (PSI); essential for photochemical activity. FB is the terminal electron acceptor of PSI, donating electrons to ferredoxin. The C-terminus interacts with PsaA/B/D and helps assemble the protein into the PSI complex. Required for binding of PsaD and PsaE to PSI. PSI is a plastocyanin-ferredoxin oxidoreductase, converting photonic excitation into a charge separation, which transfers an electron from the donor P700 chlorophyll pair to the spectroscopically characterized acceptors A0, A1, FX, FA and FB in turn.</text>
</comment>
<comment type="catalytic activity">
    <reaction evidence="2">
        <text>reduced [plastocyanin] + hnu + oxidized [2Fe-2S]-[ferredoxin] = oxidized [plastocyanin] + reduced [2Fe-2S]-[ferredoxin]</text>
        <dbReference type="Rhea" id="RHEA:30407"/>
        <dbReference type="Rhea" id="RHEA-COMP:10000"/>
        <dbReference type="Rhea" id="RHEA-COMP:10001"/>
        <dbReference type="Rhea" id="RHEA-COMP:10039"/>
        <dbReference type="Rhea" id="RHEA-COMP:10040"/>
        <dbReference type="ChEBI" id="CHEBI:29036"/>
        <dbReference type="ChEBI" id="CHEBI:30212"/>
        <dbReference type="ChEBI" id="CHEBI:33737"/>
        <dbReference type="ChEBI" id="CHEBI:33738"/>
        <dbReference type="ChEBI" id="CHEBI:49552"/>
        <dbReference type="EC" id="1.97.1.12"/>
    </reaction>
</comment>
<comment type="cofactor">
    <cofactor evidence="2">
        <name>[4Fe-4S] cluster</name>
        <dbReference type="ChEBI" id="CHEBI:49883"/>
    </cofactor>
    <text evidence="2">Binds 2 [4Fe-4S] clusters. Cluster 2 is most probably the spectroscopically characterized electron acceptor FA and cluster 1 is most probably FB.</text>
</comment>
<comment type="subunit">
    <text evidence="2">The eukaryotic PSI reaction center is composed of at least 11 subunits.</text>
</comment>
<comment type="subcellular location">
    <subcellularLocation>
        <location evidence="2">Plastid</location>
        <location evidence="2">Chloroplast thylakoid membrane</location>
        <topology evidence="2">Peripheral membrane protein</topology>
        <orientation evidence="2">Stromal side</orientation>
    </subcellularLocation>
</comment>
<keyword id="KW-0004">4Fe-4S</keyword>
<keyword id="KW-0150">Chloroplast</keyword>
<keyword id="KW-0249">Electron transport</keyword>
<keyword id="KW-0408">Iron</keyword>
<keyword id="KW-0411">Iron-sulfur</keyword>
<keyword id="KW-0472">Membrane</keyword>
<keyword id="KW-0479">Metal-binding</keyword>
<keyword id="KW-0560">Oxidoreductase</keyword>
<keyword id="KW-0602">Photosynthesis</keyword>
<keyword id="KW-0603">Photosystem I</keyword>
<keyword id="KW-0934">Plastid</keyword>
<keyword id="KW-0677">Repeat</keyword>
<keyword id="KW-0793">Thylakoid</keyword>
<keyword id="KW-0813">Transport</keyword>
<feature type="initiator methionine" description="Removed" evidence="1">
    <location>
        <position position="1"/>
    </location>
</feature>
<feature type="chain" id="PRO_0000275996" description="Photosystem I iron-sulfur center">
    <location>
        <begin position="2"/>
        <end position="81"/>
    </location>
</feature>
<feature type="domain" description="4Fe-4S ferredoxin-type 1" evidence="2">
    <location>
        <begin position="2"/>
        <end position="31"/>
    </location>
</feature>
<feature type="domain" description="4Fe-4S ferredoxin-type 2" evidence="2">
    <location>
        <begin position="39"/>
        <end position="68"/>
    </location>
</feature>
<feature type="binding site" evidence="2">
    <location>
        <position position="11"/>
    </location>
    <ligand>
        <name>[4Fe-4S] cluster</name>
        <dbReference type="ChEBI" id="CHEBI:49883"/>
        <label>1</label>
    </ligand>
</feature>
<feature type="binding site" evidence="2">
    <location>
        <position position="14"/>
    </location>
    <ligand>
        <name>[4Fe-4S] cluster</name>
        <dbReference type="ChEBI" id="CHEBI:49883"/>
        <label>1</label>
    </ligand>
</feature>
<feature type="binding site" evidence="2">
    <location>
        <position position="17"/>
    </location>
    <ligand>
        <name>[4Fe-4S] cluster</name>
        <dbReference type="ChEBI" id="CHEBI:49883"/>
        <label>1</label>
    </ligand>
</feature>
<feature type="binding site" evidence="2">
    <location>
        <position position="21"/>
    </location>
    <ligand>
        <name>[4Fe-4S] cluster</name>
        <dbReference type="ChEBI" id="CHEBI:49883"/>
        <label>2</label>
    </ligand>
</feature>
<feature type="binding site" evidence="2">
    <location>
        <position position="48"/>
    </location>
    <ligand>
        <name>[4Fe-4S] cluster</name>
        <dbReference type="ChEBI" id="CHEBI:49883"/>
        <label>2</label>
    </ligand>
</feature>
<feature type="binding site" evidence="2">
    <location>
        <position position="51"/>
    </location>
    <ligand>
        <name>[4Fe-4S] cluster</name>
        <dbReference type="ChEBI" id="CHEBI:49883"/>
        <label>2</label>
    </ligand>
</feature>
<feature type="binding site" evidence="2">
    <location>
        <position position="54"/>
    </location>
    <ligand>
        <name>[4Fe-4S] cluster</name>
        <dbReference type="ChEBI" id="CHEBI:49883"/>
        <label>2</label>
    </ligand>
</feature>
<feature type="binding site" evidence="2">
    <location>
        <position position="58"/>
    </location>
    <ligand>
        <name>[4Fe-4S] cluster</name>
        <dbReference type="ChEBI" id="CHEBI:49883"/>
        <label>1</label>
    </ligand>
</feature>
<proteinExistence type="inferred from homology"/>
<gene>
    <name evidence="2" type="primary">psaC</name>
</gene>